<keyword id="KW-0413">Isomerase</keyword>
<keyword id="KW-1185">Reference proteome</keyword>
<keyword id="KW-0819">tRNA processing</keyword>
<reference key="1">
    <citation type="submission" date="2006-03" db="EMBL/GenBank/DDBJ databases">
        <title>Complete sequence of Methylobacillus flagellatus KT.</title>
        <authorList>
            <consortium name="US DOE Joint Genome Institute"/>
            <person name="Copeland A."/>
            <person name="Lucas S."/>
            <person name="Lapidus A."/>
            <person name="Barry K."/>
            <person name="Detter J.C."/>
            <person name="Glavina del Rio T."/>
            <person name="Hammon N."/>
            <person name="Israni S."/>
            <person name="Dalin E."/>
            <person name="Tice H."/>
            <person name="Pitluck S."/>
            <person name="Brettin T."/>
            <person name="Bruce D."/>
            <person name="Han C."/>
            <person name="Tapia R."/>
            <person name="Saunders E."/>
            <person name="Gilna P."/>
            <person name="Schmutz J."/>
            <person name="Larimer F."/>
            <person name="Land M."/>
            <person name="Kyrpides N."/>
            <person name="Anderson I."/>
            <person name="Richardson P."/>
        </authorList>
    </citation>
    <scope>NUCLEOTIDE SEQUENCE [LARGE SCALE GENOMIC DNA]</scope>
    <source>
        <strain>ATCC 51484 / DSM 6875 / VKM B-1610 / KT</strain>
    </source>
</reference>
<sequence length="302" mass="32919">MQFKRVKRNIDGVLLLDKPLGISSNQALQMVKRLYQAAKAGHTGSLDPLASGLLPICLGEATKFSHFLLDADKSYRALVTLGSTTTTGDVEGEIMTQAPVTVTQSELEAILQDMVGDILQVPPMYSALKHEGKALYAYAREGVEIPRKPRPVTIHAIALERFDGKQFEMVVSCSKGTYIRTLAEDIGSRLGCGAHLGGLRRLTTAHFNLKNAVTIEQLDQMSQAERDAVLLQVDAAIEDFPIVTLDADSAFYLLQGQEVWKSGLSISGLFRLYSEQGAFLGLGEQTSRGSIAPRRLLRQAGE</sequence>
<feature type="chain" id="PRO_1000084624" description="tRNA pseudouridine synthase B">
    <location>
        <begin position="1"/>
        <end position="302"/>
    </location>
</feature>
<feature type="active site" description="Nucleophile" evidence="1">
    <location>
        <position position="47"/>
    </location>
</feature>
<protein>
    <recommendedName>
        <fullName evidence="1">tRNA pseudouridine synthase B</fullName>
        <ecNumber evidence="1">5.4.99.25</ecNumber>
    </recommendedName>
    <alternativeName>
        <fullName evidence="1">tRNA pseudouridine(55) synthase</fullName>
        <shortName evidence="1">Psi55 synthase</shortName>
    </alternativeName>
    <alternativeName>
        <fullName evidence="1">tRNA pseudouridylate synthase</fullName>
    </alternativeName>
    <alternativeName>
        <fullName evidence="1">tRNA-uridine isomerase</fullName>
    </alternativeName>
</protein>
<dbReference type="EC" id="5.4.99.25" evidence="1"/>
<dbReference type="EMBL" id="CP000284">
    <property type="protein sequence ID" value="ABE48340.1"/>
    <property type="molecule type" value="Genomic_DNA"/>
</dbReference>
<dbReference type="RefSeq" id="WP_011478437.1">
    <property type="nucleotide sequence ID" value="NC_007947.1"/>
</dbReference>
<dbReference type="SMR" id="Q1GXD4"/>
<dbReference type="STRING" id="265072.Mfla_0069"/>
<dbReference type="KEGG" id="mfa:Mfla_0069"/>
<dbReference type="eggNOG" id="COG0130">
    <property type="taxonomic scope" value="Bacteria"/>
</dbReference>
<dbReference type="HOGENOM" id="CLU_032087_0_3_4"/>
<dbReference type="OrthoDB" id="9802309at2"/>
<dbReference type="Proteomes" id="UP000002440">
    <property type="component" value="Chromosome"/>
</dbReference>
<dbReference type="GO" id="GO:0003723">
    <property type="term" value="F:RNA binding"/>
    <property type="evidence" value="ECO:0007669"/>
    <property type="project" value="InterPro"/>
</dbReference>
<dbReference type="GO" id="GO:0160148">
    <property type="term" value="F:tRNA pseudouridine(55) synthase activity"/>
    <property type="evidence" value="ECO:0007669"/>
    <property type="project" value="UniProtKB-EC"/>
</dbReference>
<dbReference type="GO" id="GO:1990481">
    <property type="term" value="P:mRNA pseudouridine synthesis"/>
    <property type="evidence" value="ECO:0007669"/>
    <property type="project" value="TreeGrafter"/>
</dbReference>
<dbReference type="GO" id="GO:0031119">
    <property type="term" value="P:tRNA pseudouridine synthesis"/>
    <property type="evidence" value="ECO:0007669"/>
    <property type="project" value="UniProtKB-UniRule"/>
</dbReference>
<dbReference type="CDD" id="cd02573">
    <property type="entry name" value="PseudoU_synth_EcTruB"/>
    <property type="match status" value="1"/>
</dbReference>
<dbReference type="CDD" id="cd21152">
    <property type="entry name" value="PUA_TruB_bacterial"/>
    <property type="match status" value="1"/>
</dbReference>
<dbReference type="FunFam" id="3.30.2350.10:FF:000011">
    <property type="entry name" value="tRNA pseudouridine synthase B"/>
    <property type="match status" value="1"/>
</dbReference>
<dbReference type="Gene3D" id="3.30.2350.10">
    <property type="entry name" value="Pseudouridine synthase"/>
    <property type="match status" value="1"/>
</dbReference>
<dbReference type="Gene3D" id="2.30.130.10">
    <property type="entry name" value="PUA domain"/>
    <property type="match status" value="1"/>
</dbReference>
<dbReference type="HAMAP" id="MF_01080">
    <property type="entry name" value="TruB_bact"/>
    <property type="match status" value="1"/>
</dbReference>
<dbReference type="InterPro" id="IPR020103">
    <property type="entry name" value="PsdUridine_synth_cat_dom_sf"/>
</dbReference>
<dbReference type="InterPro" id="IPR002501">
    <property type="entry name" value="PsdUridine_synth_N"/>
</dbReference>
<dbReference type="InterPro" id="IPR015947">
    <property type="entry name" value="PUA-like_sf"/>
</dbReference>
<dbReference type="InterPro" id="IPR036974">
    <property type="entry name" value="PUA_sf"/>
</dbReference>
<dbReference type="InterPro" id="IPR014780">
    <property type="entry name" value="tRNA_psdUridine_synth_TruB"/>
</dbReference>
<dbReference type="InterPro" id="IPR015240">
    <property type="entry name" value="tRNA_sdUridine_synth_fam1_C"/>
</dbReference>
<dbReference type="InterPro" id="IPR032819">
    <property type="entry name" value="TruB_C"/>
</dbReference>
<dbReference type="NCBIfam" id="TIGR00431">
    <property type="entry name" value="TruB"/>
    <property type="match status" value="1"/>
</dbReference>
<dbReference type="PANTHER" id="PTHR13767:SF2">
    <property type="entry name" value="PSEUDOURIDYLATE SYNTHASE TRUB1"/>
    <property type="match status" value="1"/>
</dbReference>
<dbReference type="PANTHER" id="PTHR13767">
    <property type="entry name" value="TRNA-PSEUDOURIDINE SYNTHASE"/>
    <property type="match status" value="1"/>
</dbReference>
<dbReference type="Pfam" id="PF09157">
    <property type="entry name" value="TruB-C_2"/>
    <property type="match status" value="1"/>
</dbReference>
<dbReference type="Pfam" id="PF16198">
    <property type="entry name" value="TruB_C_2"/>
    <property type="match status" value="1"/>
</dbReference>
<dbReference type="Pfam" id="PF01509">
    <property type="entry name" value="TruB_N"/>
    <property type="match status" value="1"/>
</dbReference>
<dbReference type="SUPFAM" id="SSF55120">
    <property type="entry name" value="Pseudouridine synthase"/>
    <property type="match status" value="1"/>
</dbReference>
<dbReference type="SUPFAM" id="SSF88697">
    <property type="entry name" value="PUA domain-like"/>
    <property type="match status" value="1"/>
</dbReference>
<gene>
    <name evidence="1" type="primary">truB</name>
    <name type="ordered locus">Mfla_0069</name>
</gene>
<proteinExistence type="inferred from homology"/>
<evidence type="ECO:0000255" key="1">
    <source>
        <dbReference type="HAMAP-Rule" id="MF_01080"/>
    </source>
</evidence>
<accession>Q1GXD4</accession>
<organism>
    <name type="scientific">Methylobacillus flagellatus (strain ATCC 51484 / DSM 6875 / VKM B-1610 / KT)</name>
    <dbReference type="NCBI Taxonomy" id="265072"/>
    <lineage>
        <taxon>Bacteria</taxon>
        <taxon>Pseudomonadati</taxon>
        <taxon>Pseudomonadota</taxon>
        <taxon>Betaproteobacteria</taxon>
        <taxon>Nitrosomonadales</taxon>
        <taxon>Methylophilaceae</taxon>
        <taxon>Methylobacillus</taxon>
    </lineage>
</organism>
<name>TRUB_METFK</name>
<comment type="function">
    <text evidence="1">Responsible for synthesis of pseudouridine from uracil-55 in the psi GC loop of transfer RNAs.</text>
</comment>
<comment type="catalytic activity">
    <reaction evidence="1">
        <text>uridine(55) in tRNA = pseudouridine(55) in tRNA</text>
        <dbReference type="Rhea" id="RHEA:42532"/>
        <dbReference type="Rhea" id="RHEA-COMP:10101"/>
        <dbReference type="Rhea" id="RHEA-COMP:10102"/>
        <dbReference type="ChEBI" id="CHEBI:65314"/>
        <dbReference type="ChEBI" id="CHEBI:65315"/>
        <dbReference type="EC" id="5.4.99.25"/>
    </reaction>
</comment>
<comment type="similarity">
    <text evidence="1">Belongs to the pseudouridine synthase TruB family. Type 1 subfamily.</text>
</comment>